<keyword id="KW-0963">Cytoplasm</keyword>
<keyword id="KW-0648">Protein biosynthesis</keyword>
<keyword id="KW-0663">Pyridoxal phosphate</keyword>
<keyword id="KW-0711">Selenium</keyword>
<keyword id="KW-0808">Transferase</keyword>
<accession>Q0TBL4</accession>
<sequence length="463" mass="50665">MTTETRSLYSQLPAIDRLLRDSSFLSLRDTYGHTRVVELLRQMLDEAREVIRDSQTLPAWCENWAQEVDARLTKEAQSALRPVINLTGTVLHTNLGRALQAEAAVEAVAQAMRSPVTLEYDLDDAGRGHRDRALAQLLCRITGAEDACIVNNNAAAVLLMLAATASGKEVVVSRGELVEIGGAFRIPDVMRQAGCTLHEVGTTNRTHANDYRQAVNENTALLMKVHTSNYSIQGFTKAIDEAELVALGKELDVPVVTDLGSGSLVDLSQYGLPKEPMPQELIAAGVSLVSFSGDKLLGGPQAGIIVGKKEMIARLQSHPLKRALRADKMTLAALEATLRLYLHPEALSEKLPTLRLLTRSAEVIQIQAQRLQAPLAAHYGAEFAVQVMPCLSQIGSGSLPVDRLPSAALTFTPHDGRGSHLESLAARWRELPVPVIGRIYDGRLWLDLRCLEDEQRFLEMLLK</sequence>
<gene>
    <name evidence="1" type="primary">selA</name>
    <name type="ordered locus">ECP_3693</name>
</gene>
<evidence type="ECO:0000255" key="1">
    <source>
        <dbReference type="HAMAP-Rule" id="MF_00423"/>
    </source>
</evidence>
<feature type="chain" id="PRO_1000050364" description="L-seryl-tRNA(Sec) selenium transferase">
    <location>
        <begin position="1"/>
        <end position="463"/>
    </location>
</feature>
<feature type="modified residue" description="N6-(pyridoxal phosphate)lysine" evidence="1">
    <location>
        <position position="295"/>
    </location>
</feature>
<organism>
    <name type="scientific">Escherichia coli O6:K15:H31 (strain 536 / UPEC)</name>
    <dbReference type="NCBI Taxonomy" id="362663"/>
    <lineage>
        <taxon>Bacteria</taxon>
        <taxon>Pseudomonadati</taxon>
        <taxon>Pseudomonadota</taxon>
        <taxon>Gammaproteobacteria</taxon>
        <taxon>Enterobacterales</taxon>
        <taxon>Enterobacteriaceae</taxon>
        <taxon>Escherichia</taxon>
    </lineage>
</organism>
<dbReference type="EC" id="2.9.1.1" evidence="1"/>
<dbReference type="EMBL" id="CP000247">
    <property type="protein sequence ID" value="ABG71665.1"/>
    <property type="molecule type" value="Genomic_DNA"/>
</dbReference>
<dbReference type="RefSeq" id="WP_000206247.1">
    <property type="nucleotide sequence ID" value="NC_008253.1"/>
</dbReference>
<dbReference type="SMR" id="Q0TBL4"/>
<dbReference type="KEGG" id="ecp:ECP_3693"/>
<dbReference type="HOGENOM" id="CLU_038142_1_0_6"/>
<dbReference type="UniPathway" id="UPA00906">
    <property type="reaction ID" value="UER00896"/>
</dbReference>
<dbReference type="Proteomes" id="UP000009182">
    <property type="component" value="Chromosome"/>
</dbReference>
<dbReference type="GO" id="GO:0005737">
    <property type="term" value="C:cytoplasm"/>
    <property type="evidence" value="ECO:0007669"/>
    <property type="project" value="UniProtKB-SubCell"/>
</dbReference>
<dbReference type="GO" id="GO:0004125">
    <property type="term" value="F:L-seryl-tRNA(Sec) selenium transferase activity"/>
    <property type="evidence" value="ECO:0007669"/>
    <property type="project" value="UniProtKB-UniRule"/>
</dbReference>
<dbReference type="GO" id="GO:0001717">
    <property type="term" value="P:conversion of seryl-tRNAsec to selenocys-tRNAsec"/>
    <property type="evidence" value="ECO:0007669"/>
    <property type="project" value="UniProtKB-UniRule"/>
</dbReference>
<dbReference type="GO" id="GO:0001514">
    <property type="term" value="P:selenocysteine incorporation"/>
    <property type="evidence" value="ECO:0007669"/>
    <property type="project" value="UniProtKB-UniRule"/>
</dbReference>
<dbReference type="FunFam" id="3.40.640.10:FF:000028">
    <property type="entry name" value="L-seryl-tRNA(Sec) selenium transferase"/>
    <property type="match status" value="1"/>
</dbReference>
<dbReference type="FunFam" id="3.90.1150.180:FF:000001">
    <property type="entry name" value="L-seryl-tRNA(Sec) selenium transferase"/>
    <property type="match status" value="1"/>
</dbReference>
<dbReference type="Gene3D" id="3.90.1150.180">
    <property type="match status" value="1"/>
</dbReference>
<dbReference type="Gene3D" id="3.40.640.10">
    <property type="entry name" value="Type I PLP-dependent aspartate aminotransferase-like (Major domain)"/>
    <property type="match status" value="1"/>
</dbReference>
<dbReference type="HAMAP" id="MF_00423">
    <property type="entry name" value="SelA"/>
    <property type="match status" value="1"/>
</dbReference>
<dbReference type="InterPro" id="IPR015424">
    <property type="entry name" value="PyrdxlP-dep_Trfase"/>
</dbReference>
<dbReference type="InterPro" id="IPR015421">
    <property type="entry name" value="PyrdxlP-dep_Trfase_major"/>
</dbReference>
<dbReference type="InterPro" id="IPR018319">
    <property type="entry name" value="SelA-like"/>
</dbReference>
<dbReference type="InterPro" id="IPR004534">
    <property type="entry name" value="SelA_trans"/>
</dbReference>
<dbReference type="InterPro" id="IPR025862">
    <property type="entry name" value="SelA_trans_N_dom"/>
</dbReference>
<dbReference type="NCBIfam" id="TIGR00474">
    <property type="entry name" value="selA"/>
    <property type="match status" value="1"/>
</dbReference>
<dbReference type="PANTHER" id="PTHR32328">
    <property type="entry name" value="L-SERYL-TRNA(SEC) SELENIUM TRANSFERASE"/>
    <property type="match status" value="1"/>
</dbReference>
<dbReference type="PANTHER" id="PTHR32328:SF0">
    <property type="entry name" value="L-SERYL-TRNA(SEC) SELENIUM TRANSFERASE"/>
    <property type="match status" value="1"/>
</dbReference>
<dbReference type="Pfam" id="PF12390">
    <property type="entry name" value="Se-cys_synth_N"/>
    <property type="match status" value="1"/>
</dbReference>
<dbReference type="Pfam" id="PF03841">
    <property type="entry name" value="SelA"/>
    <property type="match status" value="1"/>
</dbReference>
<dbReference type="SUPFAM" id="SSF53383">
    <property type="entry name" value="PLP-dependent transferases"/>
    <property type="match status" value="1"/>
</dbReference>
<reference key="1">
    <citation type="journal article" date="2006" name="Mol. Microbiol.">
        <title>Role of pathogenicity island-associated integrases in the genome plasticity of uropathogenic Escherichia coli strain 536.</title>
        <authorList>
            <person name="Hochhut B."/>
            <person name="Wilde C."/>
            <person name="Balling G."/>
            <person name="Middendorf B."/>
            <person name="Dobrindt U."/>
            <person name="Brzuszkiewicz E."/>
            <person name="Gottschalk G."/>
            <person name="Carniel E."/>
            <person name="Hacker J."/>
        </authorList>
    </citation>
    <scope>NUCLEOTIDE SEQUENCE [LARGE SCALE GENOMIC DNA]</scope>
    <source>
        <strain>536 / UPEC</strain>
    </source>
</reference>
<protein>
    <recommendedName>
        <fullName evidence="1">L-seryl-tRNA(Sec) selenium transferase</fullName>
        <ecNumber evidence="1">2.9.1.1</ecNumber>
    </recommendedName>
    <alternativeName>
        <fullName evidence="1">Selenocysteine synthase</fullName>
        <shortName evidence="1">Sec synthase</shortName>
    </alternativeName>
    <alternativeName>
        <fullName evidence="1">Selenocysteinyl-tRNA(Sec) synthase</fullName>
    </alternativeName>
</protein>
<name>SELA_ECOL5</name>
<comment type="function">
    <text evidence="1">Converts seryl-tRNA(Sec) to selenocysteinyl-tRNA(Sec) required for selenoprotein biosynthesis.</text>
</comment>
<comment type="catalytic activity">
    <reaction evidence="1">
        <text>L-seryl-tRNA(Sec) + selenophosphate + H(+) = L-selenocysteinyl-tRNA(Sec) + phosphate</text>
        <dbReference type="Rhea" id="RHEA:22728"/>
        <dbReference type="Rhea" id="RHEA-COMP:9742"/>
        <dbReference type="Rhea" id="RHEA-COMP:9743"/>
        <dbReference type="ChEBI" id="CHEBI:15378"/>
        <dbReference type="ChEBI" id="CHEBI:16144"/>
        <dbReference type="ChEBI" id="CHEBI:43474"/>
        <dbReference type="ChEBI" id="CHEBI:78533"/>
        <dbReference type="ChEBI" id="CHEBI:78573"/>
        <dbReference type="EC" id="2.9.1.1"/>
    </reaction>
</comment>
<comment type="cofactor">
    <cofactor evidence="1">
        <name>pyridoxal 5'-phosphate</name>
        <dbReference type="ChEBI" id="CHEBI:597326"/>
    </cofactor>
</comment>
<comment type="pathway">
    <text evidence="1">Aminoacyl-tRNA biosynthesis; selenocysteinyl-tRNA(Sec) biosynthesis; selenocysteinyl-tRNA(Sec) from L-seryl-tRNA(Sec) (bacterial route): step 1/1.</text>
</comment>
<comment type="subunit">
    <text evidence="1">Homodecamer; pentamer of dimers. Binds only one seryl-tRNA(Sec) per dimer.</text>
</comment>
<comment type="subcellular location">
    <subcellularLocation>
        <location evidence="1">Cytoplasm</location>
    </subcellularLocation>
</comment>
<comment type="similarity">
    <text evidence="1">Belongs to the SelA family.</text>
</comment>
<proteinExistence type="inferred from homology"/>